<proteinExistence type="inferred from homology"/>
<organism>
    <name type="scientific">Pseudomonas aeruginosa (strain LESB58)</name>
    <dbReference type="NCBI Taxonomy" id="557722"/>
    <lineage>
        <taxon>Bacteria</taxon>
        <taxon>Pseudomonadati</taxon>
        <taxon>Pseudomonadota</taxon>
        <taxon>Gammaproteobacteria</taxon>
        <taxon>Pseudomonadales</taxon>
        <taxon>Pseudomonadaceae</taxon>
        <taxon>Pseudomonas</taxon>
    </lineage>
</organism>
<sequence>MFRGANAISLDAKGRLAMPSRYRDELVSRCAGQLIVTIDAVDPCLTVYPLPEWELIEAKLRELPSLREETRRLQRLLIGNAVDLELDGNGRFLIPPRLREYAKLDKRAMLVGQLNKFQLWDEDAWNAMAEADLAAIKQPGGLPDELRDLIL</sequence>
<feature type="chain" id="PRO_1000191322" description="Transcriptional regulator MraZ">
    <location>
        <begin position="1"/>
        <end position="151"/>
    </location>
</feature>
<feature type="domain" description="SpoVT-AbrB 1" evidence="2">
    <location>
        <begin position="5"/>
        <end position="52"/>
    </location>
</feature>
<feature type="domain" description="SpoVT-AbrB 2" evidence="2">
    <location>
        <begin position="81"/>
        <end position="124"/>
    </location>
</feature>
<dbReference type="EMBL" id="FM209186">
    <property type="protein sequence ID" value="CAW29554.1"/>
    <property type="molecule type" value="Genomic_DNA"/>
</dbReference>
<dbReference type="RefSeq" id="WP_003103101.1">
    <property type="nucleotide sequence ID" value="NC_011770.1"/>
</dbReference>
<dbReference type="SMR" id="B7UZJ9"/>
<dbReference type="GeneID" id="77222921"/>
<dbReference type="KEGG" id="pag:PLES_48001"/>
<dbReference type="HOGENOM" id="CLU_107907_2_0_6"/>
<dbReference type="GO" id="GO:0005737">
    <property type="term" value="C:cytoplasm"/>
    <property type="evidence" value="ECO:0007669"/>
    <property type="project" value="UniProtKB-UniRule"/>
</dbReference>
<dbReference type="GO" id="GO:0009295">
    <property type="term" value="C:nucleoid"/>
    <property type="evidence" value="ECO:0007669"/>
    <property type="project" value="UniProtKB-SubCell"/>
</dbReference>
<dbReference type="GO" id="GO:0003700">
    <property type="term" value="F:DNA-binding transcription factor activity"/>
    <property type="evidence" value="ECO:0007669"/>
    <property type="project" value="UniProtKB-UniRule"/>
</dbReference>
<dbReference type="GO" id="GO:0000976">
    <property type="term" value="F:transcription cis-regulatory region binding"/>
    <property type="evidence" value="ECO:0007669"/>
    <property type="project" value="TreeGrafter"/>
</dbReference>
<dbReference type="GO" id="GO:2000143">
    <property type="term" value="P:negative regulation of DNA-templated transcription initiation"/>
    <property type="evidence" value="ECO:0007669"/>
    <property type="project" value="TreeGrafter"/>
</dbReference>
<dbReference type="CDD" id="cd16321">
    <property type="entry name" value="MraZ_C"/>
    <property type="match status" value="1"/>
</dbReference>
<dbReference type="CDD" id="cd16320">
    <property type="entry name" value="MraZ_N"/>
    <property type="match status" value="1"/>
</dbReference>
<dbReference type="FunFam" id="3.40.1550.20:FF:000001">
    <property type="entry name" value="Transcriptional regulator MraZ"/>
    <property type="match status" value="1"/>
</dbReference>
<dbReference type="Gene3D" id="3.40.1550.20">
    <property type="entry name" value="Transcriptional regulator MraZ domain"/>
    <property type="match status" value="1"/>
</dbReference>
<dbReference type="HAMAP" id="MF_01008">
    <property type="entry name" value="MraZ"/>
    <property type="match status" value="1"/>
</dbReference>
<dbReference type="InterPro" id="IPR003444">
    <property type="entry name" value="MraZ"/>
</dbReference>
<dbReference type="InterPro" id="IPR035644">
    <property type="entry name" value="MraZ_C"/>
</dbReference>
<dbReference type="InterPro" id="IPR020603">
    <property type="entry name" value="MraZ_dom"/>
</dbReference>
<dbReference type="InterPro" id="IPR035642">
    <property type="entry name" value="MraZ_N"/>
</dbReference>
<dbReference type="InterPro" id="IPR038619">
    <property type="entry name" value="MraZ_sf"/>
</dbReference>
<dbReference type="InterPro" id="IPR007159">
    <property type="entry name" value="SpoVT-AbrB_dom"/>
</dbReference>
<dbReference type="InterPro" id="IPR037914">
    <property type="entry name" value="SpoVT-AbrB_sf"/>
</dbReference>
<dbReference type="NCBIfam" id="TIGR00242">
    <property type="entry name" value="division/cell wall cluster transcriptional repressor MraZ"/>
    <property type="match status" value="1"/>
</dbReference>
<dbReference type="PANTHER" id="PTHR34701">
    <property type="entry name" value="TRANSCRIPTIONAL REGULATOR MRAZ"/>
    <property type="match status" value="1"/>
</dbReference>
<dbReference type="PANTHER" id="PTHR34701:SF1">
    <property type="entry name" value="TRANSCRIPTIONAL REGULATOR MRAZ"/>
    <property type="match status" value="1"/>
</dbReference>
<dbReference type="Pfam" id="PF02381">
    <property type="entry name" value="MraZ"/>
    <property type="match status" value="2"/>
</dbReference>
<dbReference type="SUPFAM" id="SSF89447">
    <property type="entry name" value="AbrB/MazE/MraZ-like"/>
    <property type="match status" value="1"/>
</dbReference>
<dbReference type="PROSITE" id="PS51740">
    <property type="entry name" value="SPOVT_ABRB"/>
    <property type="match status" value="2"/>
</dbReference>
<accession>B7UZJ9</accession>
<gene>
    <name evidence="1" type="primary">mraZ</name>
    <name type="ordered locus">PLES_48001</name>
</gene>
<evidence type="ECO:0000255" key="1">
    <source>
        <dbReference type="HAMAP-Rule" id="MF_01008"/>
    </source>
</evidence>
<evidence type="ECO:0000255" key="2">
    <source>
        <dbReference type="PROSITE-ProRule" id="PRU01076"/>
    </source>
</evidence>
<keyword id="KW-0963">Cytoplasm</keyword>
<keyword id="KW-0238">DNA-binding</keyword>
<keyword id="KW-0677">Repeat</keyword>
<keyword id="KW-0804">Transcription</keyword>
<keyword id="KW-0805">Transcription regulation</keyword>
<comment type="subunit">
    <text evidence="1">Forms oligomers.</text>
</comment>
<comment type="subcellular location">
    <subcellularLocation>
        <location evidence="1">Cytoplasm</location>
        <location evidence="1">Nucleoid</location>
    </subcellularLocation>
</comment>
<comment type="similarity">
    <text evidence="1">Belongs to the MraZ family.</text>
</comment>
<name>MRAZ_PSEA8</name>
<protein>
    <recommendedName>
        <fullName>Transcriptional regulator MraZ</fullName>
    </recommendedName>
</protein>
<reference key="1">
    <citation type="journal article" date="2009" name="Genome Res.">
        <title>Newly introduced genomic prophage islands are critical determinants of in vivo competitiveness in the Liverpool epidemic strain of Pseudomonas aeruginosa.</title>
        <authorList>
            <person name="Winstanley C."/>
            <person name="Langille M.G.I."/>
            <person name="Fothergill J.L."/>
            <person name="Kukavica-Ibrulj I."/>
            <person name="Paradis-Bleau C."/>
            <person name="Sanschagrin F."/>
            <person name="Thomson N.R."/>
            <person name="Winsor G.L."/>
            <person name="Quail M.A."/>
            <person name="Lennard N."/>
            <person name="Bignell A."/>
            <person name="Clarke L."/>
            <person name="Seeger K."/>
            <person name="Saunders D."/>
            <person name="Harris D."/>
            <person name="Parkhill J."/>
            <person name="Hancock R.E.W."/>
            <person name="Brinkman F.S.L."/>
            <person name="Levesque R.C."/>
        </authorList>
    </citation>
    <scope>NUCLEOTIDE SEQUENCE [LARGE SCALE GENOMIC DNA]</scope>
    <source>
        <strain>LESB58</strain>
    </source>
</reference>